<reference key="1">
    <citation type="journal article" date="1997" name="Nature">
        <title>Genomic sequence of a Lyme disease spirochaete, Borrelia burgdorferi.</title>
        <authorList>
            <person name="Fraser C.M."/>
            <person name="Casjens S."/>
            <person name="Huang W.M."/>
            <person name="Sutton G.G."/>
            <person name="Clayton R.A."/>
            <person name="Lathigra R."/>
            <person name="White O."/>
            <person name="Ketchum K.A."/>
            <person name="Dodson R.J."/>
            <person name="Hickey E.K."/>
            <person name="Gwinn M.L."/>
            <person name="Dougherty B.A."/>
            <person name="Tomb J.-F."/>
            <person name="Fleischmann R.D."/>
            <person name="Richardson D.L."/>
            <person name="Peterson J.D."/>
            <person name="Kerlavage A.R."/>
            <person name="Quackenbush J."/>
            <person name="Salzberg S.L."/>
            <person name="Hanson M."/>
            <person name="van Vugt R."/>
            <person name="Palmer N."/>
            <person name="Adams M.D."/>
            <person name="Gocayne J.D."/>
            <person name="Weidman J.F."/>
            <person name="Utterback T.R."/>
            <person name="Watthey L."/>
            <person name="McDonald L.A."/>
            <person name="Artiach P."/>
            <person name="Bowman C."/>
            <person name="Garland S.A."/>
            <person name="Fujii C."/>
            <person name="Cotton M.D."/>
            <person name="Horst K."/>
            <person name="Roberts K.M."/>
            <person name="Hatch B."/>
            <person name="Smith H.O."/>
            <person name="Venter J.C."/>
        </authorList>
    </citation>
    <scope>NUCLEOTIDE SEQUENCE [LARGE SCALE GENOMIC DNA]</scope>
    <source>
        <strain>ATCC 35210 / DSM 4680 / CIP 102532 / B31</strain>
    </source>
</reference>
<protein>
    <recommendedName>
        <fullName>Uncharacterized protein BB_0013</fullName>
    </recommendedName>
</protein>
<feature type="chain" id="PRO_0000174366" description="Uncharacterized protein BB_0013">
    <location>
        <begin position="1"/>
        <end position="199"/>
    </location>
</feature>
<gene>
    <name type="ordered locus">BB_0013</name>
</gene>
<keyword id="KW-1185">Reference proteome</keyword>
<organism>
    <name type="scientific">Borreliella burgdorferi (strain ATCC 35210 / DSM 4680 / CIP 102532 / B31)</name>
    <name type="common">Borrelia burgdorferi</name>
    <dbReference type="NCBI Taxonomy" id="224326"/>
    <lineage>
        <taxon>Bacteria</taxon>
        <taxon>Pseudomonadati</taxon>
        <taxon>Spirochaetota</taxon>
        <taxon>Spirochaetia</taxon>
        <taxon>Spirochaetales</taxon>
        <taxon>Borreliaceae</taxon>
        <taxon>Borreliella</taxon>
    </lineage>
</organism>
<dbReference type="EMBL" id="AE000783">
    <property type="protein sequence ID" value="AAC66401.1"/>
    <property type="molecule type" value="Genomic_DNA"/>
</dbReference>
<dbReference type="PIR" id="E70101">
    <property type="entry name" value="E70101"/>
</dbReference>
<dbReference type="RefSeq" id="NP_212147.1">
    <property type="nucleotide sequence ID" value="NC_001318.1"/>
</dbReference>
<dbReference type="RefSeq" id="WP_010889661.1">
    <property type="nucleotide sequence ID" value="NC_001318.1"/>
</dbReference>
<dbReference type="STRING" id="224326.BB_0013"/>
<dbReference type="PaxDb" id="224326-BB_0013"/>
<dbReference type="EnsemblBacteria" id="AAC66401">
    <property type="protein sequence ID" value="AAC66401"/>
    <property type="gene ID" value="BB_0013"/>
</dbReference>
<dbReference type="KEGG" id="bbu:BB_0013"/>
<dbReference type="PATRIC" id="fig|224326.49.peg.411"/>
<dbReference type="HOGENOM" id="CLU_1363999_0_0_12"/>
<dbReference type="OrthoDB" id="5290748at2"/>
<dbReference type="Proteomes" id="UP000001807">
    <property type="component" value="Chromosome"/>
</dbReference>
<dbReference type="Gene3D" id="3.40.470.10">
    <property type="entry name" value="Uracil-DNA glycosylase-like domain"/>
    <property type="match status" value="1"/>
</dbReference>
<dbReference type="InterPro" id="IPR036895">
    <property type="entry name" value="Uracil-DNA_glycosylase-like_sf"/>
</dbReference>
<dbReference type="SUPFAM" id="SSF52141">
    <property type="entry name" value="Uracil-DNA glycosylase-like"/>
    <property type="match status" value="1"/>
</dbReference>
<accession>O51046</accession>
<sequence length="199" mass="23301">MNNSVLTKKLFLLKILTNNIEGKITENFEEIDNEIKQKIEKAKNTKIYQKNENSKEPAKLPLENQNSKNILLNNSLQEKGINDQIIIYVNKNYLNEPSRDIITKWCKSINIYNYKIIDTIESLNLEISNKNPKAILSCEEIDFFLNQPLRIHIVRGIELRFKGIPLVFTYLPTNQIKNPELKKEIWQDLKIIKGIIKYG</sequence>
<name>Y013_BORBU</name>
<proteinExistence type="predicted"/>